<protein>
    <recommendedName>
        <fullName evidence="1">Urease accessory protein UreF</fullName>
    </recommendedName>
</protein>
<evidence type="ECO:0000255" key="1">
    <source>
        <dbReference type="HAMAP-Rule" id="MF_01385"/>
    </source>
</evidence>
<evidence type="ECO:0007829" key="2">
    <source>
        <dbReference type="PDB" id="6JC4"/>
    </source>
</evidence>
<comment type="function">
    <text evidence="1">Required for maturation of urease via the functional incorporation of the urease nickel metallocenter.</text>
</comment>
<comment type="subunit">
    <text evidence="1">UreD, UreF and UreG form a complex that acts as a GTP-hydrolysis-dependent molecular chaperone, activating the urease apoprotein by helping to assemble the nickel containing metallocenter of UreC. The UreE protein probably delivers the nickel.</text>
</comment>
<comment type="subcellular location">
    <subcellularLocation>
        <location evidence="1">Cytoplasm</location>
    </subcellularLocation>
</comment>
<comment type="similarity">
    <text evidence="1">Belongs to the UreF family.</text>
</comment>
<sequence length="224" mass="25236">MSTAEQRLRLMQLASSNLPVGGYSWSQGLEWAVEAGWVPDVAAFERWQRRQMTEGFFTVDLPLFARLYRACEQGDIAAAQRWTAYLLACRETRELREEERNRGAAFARLLSDWQPDCPPPWRSLCQQSQLAGMAWLGVRWRIALPEMALSLGYSWIESAVMAGVKLVPFGQQAAQQLILRLCDHYAAEMPRALATPDGDIGSATPLAAIASARHETQYSRLFRS</sequence>
<keyword id="KW-0002">3D-structure</keyword>
<keyword id="KW-0143">Chaperone</keyword>
<keyword id="KW-0963">Cytoplasm</keyword>
<keyword id="KW-0996">Nickel insertion</keyword>
<dbReference type="EMBL" id="CP000647">
    <property type="protein sequence ID" value="ABR78865.1"/>
    <property type="molecule type" value="Genomic_DNA"/>
</dbReference>
<dbReference type="RefSeq" id="WP_015959000.1">
    <property type="nucleotide sequence ID" value="NC_009648.1"/>
</dbReference>
<dbReference type="PDB" id="6JC4">
    <property type="method" value="X-ray"/>
    <property type="resolution" value="2.30 A"/>
    <property type="chains" value="A/B/C/D=1-224"/>
</dbReference>
<dbReference type="PDBsum" id="6JC4"/>
<dbReference type="SMR" id="A6TE44"/>
<dbReference type="STRING" id="272620.KPN_03469"/>
<dbReference type="PaxDb" id="272620-KPN_03469"/>
<dbReference type="EnsemblBacteria" id="ABR78865">
    <property type="protein sequence ID" value="ABR78865"/>
    <property type="gene ID" value="KPN_03469"/>
</dbReference>
<dbReference type="KEGG" id="kpn:KPN_03469"/>
<dbReference type="HOGENOM" id="CLU_049215_2_1_6"/>
<dbReference type="Proteomes" id="UP000000265">
    <property type="component" value="Chromosome"/>
</dbReference>
<dbReference type="GO" id="GO:0005737">
    <property type="term" value="C:cytoplasm"/>
    <property type="evidence" value="ECO:0007669"/>
    <property type="project" value="UniProtKB-SubCell"/>
</dbReference>
<dbReference type="GO" id="GO:0016151">
    <property type="term" value="F:nickel cation binding"/>
    <property type="evidence" value="ECO:0007669"/>
    <property type="project" value="UniProtKB-UniRule"/>
</dbReference>
<dbReference type="Gene3D" id="1.10.4190.10">
    <property type="entry name" value="Urease accessory protein UreF"/>
    <property type="match status" value="1"/>
</dbReference>
<dbReference type="HAMAP" id="MF_01385">
    <property type="entry name" value="UreF"/>
    <property type="match status" value="1"/>
</dbReference>
<dbReference type="InterPro" id="IPR002639">
    <property type="entry name" value="UreF"/>
</dbReference>
<dbReference type="InterPro" id="IPR038277">
    <property type="entry name" value="UreF_sf"/>
</dbReference>
<dbReference type="PANTHER" id="PTHR33620">
    <property type="entry name" value="UREASE ACCESSORY PROTEIN F"/>
    <property type="match status" value="1"/>
</dbReference>
<dbReference type="PANTHER" id="PTHR33620:SF1">
    <property type="entry name" value="UREASE ACCESSORY PROTEIN F"/>
    <property type="match status" value="1"/>
</dbReference>
<dbReference type="Pfam" id="PF01730">
    <property type="entry name" value="UreF"/>
    <property type="match status" value="1"/>
</dbReference>
<dbReference type="PIRSF" id="PIRSF009467">
    <property type="entry name" value="Ureas_acces_UreF"/>
    <property type="match status" value="1"/>
</dbReference>
<reference key="1">
    <citation type="submission" date="2006-09" db="EMBL/GenBank/DDBJ databases">
        <authorList>
            <consortium name="The Klebsiella pneumonia Genome Sequencing Project"/>
            <person name="McClelland M."/>
            <person name="Sanderson E.K."/>
            <person name="Spieth J."/>
            <person name="Clifton W.S."/>
            <person name="Latreille P."/>
            <person name="Sabo A."/>
            <person name="Pepin K."/>
            <person name="Bhonagiri V."/>
            <person name="Porwollik S."/>
            <person name="Ali J."/>
            <person name="Wilson R.K."/>
        </authorList>
    </citation>
    <scope>NUCLEOTIDE SEQUENCE [LARGE SCALE GENOMIC DNA]</scope>
    <source>
        <strain>ATCC 700721 / MGH 78578</strain>
    </source>
</reference>
<proteinExistence type="evidence at protein level"/>
<feature type="chain" id="PRO_0000344128" description="Urease accessory protein UreF">
    <location>
        <begin position="1"/>
        <end position="224"/>
    </location>
</feature>
<feature type="helix" evidence="2">
    <location>
        <begin position="4"/>
        <end position="14"/>
    </location>
</feature>
<feature type="turn" evidence="2">
    <location>
        <begin position="24"/>
        <end position="26"/>
    </location>
</feature>
<feature type="helix" evidence="2">
    <location>
        <begin position="27"/>
        <end position="35"/>
    </location>
</feature>
<feature type="helix" evidence="2">
    <location>
        <begin position="41"/>
        <end position="54"/>
    </location>
</feature>
<feature type="helix" evidence="2">
    <location>
        <begin position="55"/>
        <end position="59"/>
    </location>
</feature>
<feature type="helix" evidence="2">
    <location>
        <begin position="60"/>
        <end position="72"/>
    </location>
</feature>
<feature type="helix" evidence="2">
    <location>
        <begin position="76"/>
        <end position="89"/>
    </location>
</feature>
<feature type="helix" evidence="2">
    <location>
        <begin position="93"/>
        <end position="113"/>
    </location>
</feature>
<feature type="helix" evidence="2">
    <location>
        <begin position="119"/>
        <end position="125"/>
    </location>
</feature>
<feature type="helix" evidence="2">
    <location>
        <begin position="129"/>
        <end position="140"/>
    </location>
</feature>
<feature type="helix" evidence="2">
    <location>
        <begin position="144"/>
        <end position="166"/>
    </location>
</feature>
<feature type="helix" evidence="2">
    <location>
        <begin position="171"/>
        <end position="194"/>
    </location>
</feature>
<feature type="helix" evidence="2">
    <location>
        <begin position="197"/>
        <end position="199"/>
    </location>
</feature>
<name>UREF_KLEP7</name>
<accession>A6TE44</accession>
<gene>
    <name evidence="1" type="primary">ureF</name>
    <name type="ordered locus">KPN78578_34040</name>
    <name type="ORF">KPN_03469</name>
</gene>
<organism>
    <name type="scientific">Klebsiella pneumoniae subsp. pneumoniae (strain ATCC 700721 / MGH 78578)</name>
    <dbReference type="NCBI Taxonomy" id="272620"/>
    <lineage>
        <taxon>Bacteria</taxon>
        <taxon>Pseudomonadati</taxon>
        <taxon>Pseudomonadota</taxon>
        <taxon>Gammaproteobacteria</taxon>
        <taxon>Enterobacterales</taxon>
        <taxon>Enterobacteriaceae</taxon>
        <taxon>Klebsiella/Raoultella group</taxon>
        <taxon>Klebsiella</taxon>
        <taxon>Klebsiella pneumoniae complex</taxon>
    </lineage>
</organism>